<sequence length="449" mass="51046">MALTVKEEEFSNTLIKNASAFDRLKLGNLKNLKIQKKLQFLYLILFVLITGVFFFFLIGNFYSHRKLYQVIKNTKHTTIGFKIDRPHDKVLSSVLKNKLSTYVKESFKFFKSGYAQKGYLGSENDSIELDDVANLMFYGEGQIGTNKQPFMFIFDTGSANLWVPSVNCDSIGCSTKHLYDASASKSYEKDGTKVEISYGSGTVRGYFSKDVISLGDLSLPYKFIEVTDADDLEPIYSGSEFDGILGLGWKDLSIGSIDPVVVELKKQNKIDNALFTFYLPVHDKHVGYLTIGGIESDFYEGPLTYEKLNHDLYWQIDLDIHFGKYVMQKANAVVDSGTSTITAPTSFLNKFFRDMNVIKVPFLPLYVTTCDNDDLPTLEFHSRNNKYTLEPEFYMDPLSDIDPALCMLYILPVDIDDNTFILGDPFMRKYFTVFDYEKESVGFAVAKNL</sequence>
<evidence type="ECO:0000250" key="1">
    <source>
        <dbReference type="UniProtKB" id="Q17SB3"/>
    </source>
</evidence>
<evidence type="ECO:0000255" key="2"/>
<evidence type="ECO:0000255" key="3">
    <source>
        <dbReference type="PROSITE-ProRule" id="PRU01103"/>
    </source>
</evidence>
<evidence type="ECO:0000255" key="4">
    <source>
        <dbReference type="RuleBase" id="RU000454"/>
    </source>
</evidence>
<evidence type="ECO:0000269" key="5">
    <source>
    </source>
</evidence>
<evidence type="ECO:0000269" key="6">
    <source>
    </source>
</evidence>
<evidence type="ECO:0000269" key="7">
    <source>
    </source>
</evidence>
<evidence type="ECO:0000269" key="8">
    <source>
    </source>
</evidence>
<evidence type="ECO:0000303" key="9">
    <source>
    </source>
</evidence>
<evidence type="ECO:0000305" key="10"/>
<evidence type="ECO:0000312" key="11">
    <source>
        <dbReference type="EMBL" id="CZT99785.1"/>
    </source>
</evidence>
<evidence type="ECO:0000312" key="12">
    <source>
        <dbReference type="Proteomes" id="UP000001450"/>
    </source>
</evidence>
<evidence type="ECO:0007744" key="13">
    <source>
        <dbReference type="PDB" id="1LS5"/>
    </source>
</evidence>
<evidence type="ECO:0007829" key="14">
    <source>
        <dbReference type="PDB" id="1LS5"/>
    </source>
</evidence>
<feature type="propeptide" id="PRO_0000453386" evidence="1">
    <location>
        <begin position="1"/>
        <end position="121"/>
    </location>
</feature>
<feature type="chain" id="PRO_0000453387" description="Plasmepsin IV">
    <location>
        <begin position="122"/>
        <end position="449"/>
    </location>
</feature>
<feature type="topological domain" description="Cytoplasmic" evidence="10">
    <location>
        <begin position="1"/>
        <end position="37"/>
    </location>
</feature>
<feature type="transmembrane region" description="Helical; Signal-anchor for type II membrane protein" evidence="2">
    <location>
        <begin position="38"/>
        <end position="58"/>
    </location>
</feature>
<feature type="topological domain" description="Lumenal" evidence="10">
    <location>
        <begin position="59"/>
        <end position="449"/>
    </location>
</feature>
<feature type="domain" description="Peptidase A1" evidence="3">
    <location>
        <begin position="137"/>
        <end position="444"/>
    </location>
</feature>
<feature type="active site" evidence="3">
    <location>
        <position position="155"/>
    </location>
</feature>
<feature type="active site" evidence="3">
    <location>
        <position position="335"/>
    </location>
</feature>
<feature type="disulfide bond" evidence="5 13">
    <location>
        <begin position="168"/>
        <end position="173"/>
    </location>
</feature>
<feature type="disulfide bond" evidence="5 13">
    <location>
        <begin position="370"/>
        <end position="406"/>
    </location>
</feature>
<feature type="strand" evidence="14">
    <location>
        <begin position="125"/>
        <end position="128"/>
    </location>
</feature>
<feature type="strand" evidence="14">
    <location>
        <begin position="130"/>
        <end position="132"/>
    </location>
</feature>
<feature type="strand" evidence="14">
    <location>
        <begin position="141"/>
        <end position="143"/>
    </location>
</feature>
<feature type="turn" evidence="14">
    <location>
        <begin position="144"/>
        <end position="147"/>
    </location>
</feature>
<feature type="strand" evidence="14">
    <location>
        <begin position="148"/>
        <end position="150"/>
    </location>
</feature>
<feature type="strand" evidence="14">
    <location>
        <begin position="152"/>
        <end position="154"/>
    </location>
</feature>
<feature type="strand" evidence="14">
    <location>
        <begin position="161"/>
        <end position="165"/>
    </location>
</feature>
<feature type="helix" evidence="14">
    <location>
        <begin position="171"/>
        <end position="174"/>
    </location>
</feature>
<feature type="helix" evidence="14">
    <location>
        <begin position="181"/>
        <end position="183"/>
    </location>
</feature>
<feature type="strand" evidence="14">
    <location>
        <begin position="188"/>
        <end position="197"/>
    </location>
</feature>
<feature type="strand" evidence="14">
    <location>
        <begin position="202"/>
        <end position="214"/>
    </location>
</feature>
<feature type="strand" evidence="14">
    <location>
        <begin position="217"/>
        <end position="228"/>
    </location>
</feature>
<feature type="helix" evidence="14">
    <location>
        <begin position="230"/>
        <end position="232"/>
    </location>
</feature>
<feature type="turn" evidence="14">
    <location>
        <begin position="233"/>
        <end position="235"/>
    </location>
</feature>
<feature type="helix" evidence="14">
    <location>
        <begin position="236"/>
        <end position="238"/>
    </location>
</feature>
<feature type="strand" evidence="14">
    <location>
        <begin position="243"/>
        <end position="245"/>
    </location>
</feature>
<feature type="turn" evidence="14">
    <location>
        <begin position="250"/>
        <end position="252"/>
    </location>
</feature>
<feature type="helix" evidence="14">
    <location>
        <begin position="260"/>
        <end position="266"/>
    </location>
</feature>
<feature type="strand" evidence="14">
    <location>
        <begin position="270"/>
        <end position="278"/>
    </location>
</feature>
<feature type="strand" evidence="14">
    <location>
        <begin position="281"/>
        <end position="285"/>
    </location>
</feature>
<feature type="strand" evidence="14">
    <location>
        <begin position="288"/>
        <end position="293"/>
    </location>
</feature>
<feature type="helix" evidence="14">
    <location>
        <begin position="296"/>
        <end position="298"/>
    </location>
</feature>
<feature type="strand" evidence="14">
    <location>
        <begin position="299"/>
        <end position="301"/>
    </location>
</feature>
<feature type="strand" evidence="14">
    <location>
        <begin position="304"/>
        <end position="306"/>
    </location>
</feature>
<feature type="turn" evidence="14">
    <location>
        <begin position="311"/>
        <end position="314"/>
    </location>
</feature>
<feature type="strand" evidence="14">
    <location>
        <begin position="315"/>
        <end position="317"/>
    </location>
</feature>
<feature type="strand" evidence="14">
    <location>
        <begin position="319"/>
        <end position="324"/>
    </location>
</feature>
<feature type="strand" evidence="14">
    <location>
        <begin position="331"/>
        <end position="334"/>
    </location>
</feature>
<feature type="strand" evidence="14">
    <location>
        <begin position="339"/>
        <end position="343"/>
    </location>
</feature>
<feature type="helix" evidence="14">
    <location>
        <begin position="346"/>
        <end position="349"/>
    </location>
</feature>
<feature type="turn" evidence="14">
    <location>
        <begin position="350"/>
        <end position="353"/>
    </location>
</feature>
<feature type="strand" evidence="14">
    <location>
        <begin position="361"/>
        <end position="364"/>
    </location>
</feature>
<feature type="strand" evidence="14">
    <location>
        <begin position="367"/>
        <end position="369"/>
    </location>
</feature>
<feature type="strand" evidence="14">
    <location>
        <begin position="378"/>
        <end position="382"/>
    </location>
</feature>
<feature type="strand" evidence="14">
    <location>
        <begin position="385"/>
        <end position="389"/>
    </location>
</feature>
<feature type="helix" evidence="14">
    <location>
        <begin position="391"/>
        <end position="394"/>
    </location>
</feature>
<feature type="strand" evidence="14">
    <location>
        <begin position="405"/>
        <end position="407"/>
    </location>
</feature>
<feature type="strand" evidence="14">
    <location>
        <begin position="410"/>
        <end position="412"/>
    </location>
</feature>
<feature type="strand" evidence="14">
    <location>
        <begin position="416"/>
        <end position="418"/>
    </location>
</feature>
<feature type="strand" evidence="14">
    <location>
        <begin position="420"/>
        <end position="422"/>
    </location>
</feature>
<feature type="helix" evidence="14">
    <location>
        <begin position="424"/>
        <end position="427"/>
    </location>
</feature>
<feature type="strand" evidence="14">
    <location>
        <begin position="432"/>
        <end position="435"/>
    </location>
</feature>
<feature type="turn" evidence="14">
    <location>
        <begin position="436"/>
        <end position="439"/>
    </location>
</feature>
<feature type="strand" evidence="14">
    <location>
        <begin position="440"/>
        <end position="443"/>
    </location>
</feature>
<organism evidence="12">
    <name type="scientific">Plasmodium falciparum (isolate 3D7)</name>
    <dbReference type="NCBI Taxonomy" id="36329"/>
    <lineage>
        <taxon>Eukaryota</taxon>
        <taxon>Sar</taxon>
        <taxon>Alveolata</taxon>
        <taxon>Apicomplexa</taxon>
        <taxon>Aconoidasida</taxon>
        <taxon>Haemosporida</taxon>
        <taxon>Plasmodiidae</taxon>
        <taxon>Plasmodium</taxon>
        <taxon>Plasmodium (Laverania)</taxon>
    </lineage>
</organism>
<protein>
    <recommendedName>
        <fullName evidence="9">Plasmepsin IV</fullName>
        <ecNumber evidence="8">3.4.23.39</ecNumber>
    </recommendedName>
    <alternativeName>
        <fullName evidence="10">Plasmepsin 4</fullName>
    </alternativeName>
</protein>
<accession>Q8IM16</accession>
<dbReference type="EC" id="3.4.23.39" evidence="8"/>
<dbReference type="EMBL" id="LN999946">
    <property type="protein sequence ID" value="CZT99785.1"/>
    <property type="molecule type" value="Genomic_DNA"/>
</dbReference>
<dbReference type="RefSeq" id="XP_001348248.1">
    <property type="nucleotide sequence ID" value="XM_001348212.1"/>
</dbReference>
<dbReference type="PDB" id="1LS5">
    <property type="method" value="X-ray"/>
    <property type="resolution" value="2.80 A"/>
    <property type="chains" value="A/B=122-449"/>
</dbReference>
<dbReference type="PDBsum" id="1LS5"/>
<dbReference type="SMR" id="Q8IM16"/>
<dbReference type="FunCoup" id="Q8IM16">
    <property type="interactions" value="13"/>
</dbReference>
<dbReference type="STRING" id="36329.Q8IM16"/>
<dbReference type="BindingDB" id="Q8IM16"/>
<dbReference type="ChEMBL" id="CHEMBL1741262"/>
<dbReference type="DrugBank" id="DB11638">
    <property type="generic name" value="Artenimol"/>
</dbReference>
<dbReference type="MEROPS" id="A01.059"/>
<dbReference type="SwissPalm" id="Q8IM16"/>
<dbReference type="PaxDb" id="5833-PF14_0075"/>
<dbReference type="EnsemblProtists" id="CZT99785">
    <property type="protein sequence ID" value="CZT99785"/>
    <property type="gene ID" value="PF3D7_1407800"/>
</dbReference>
<dbReference type="GeneID" id="811657"/>
<dbReference type="KEGG" id="pfa:PF3D7_1407800"/>
<dbReference type="VEuPathDB" id="PlasmoDB:PF3D7_1407800"/>
<dbReference type="HOGENOM" id="CLU_013253_3_2_1"/>
<dbReference type="InParanoid" id="Q8IM16"/>
<dbReference type="OMA" id="YSGEIYW"/>
<dbReference type="OrthoDB" id="771136at2759"/>
<dbReference type="PhylomeDB" id="Q8IM16"/>
<dbReference type="BRENDA" id="3.4.23.B14">
    <property type="organism ID" value="4889"/>
</dbReference>
<dbReference type="Reactome" id="R-PFA-2132295">
    <property type="pathway name" value="MHC class II antigen presentation"/>
</dbReference>
<dbReference type="Reactome" id="R-PFA-6798695">
    <property type="pathway name" value="Neutrophil degranulation"/>
</dbReference>
<dbReference type="EvolutionaryTrace" id="Q8IM16"/>
<dbReference type="Proteomes" id="UP000001450">
    <property type="component" value="Chromosome 14"/>
</dbReference>
<dbReference type="GO" id="GO:0020020">
    <property type="term" value="C:food vacuole"/>
    <property type="evidence" value="ECO:0000314"/>
    <property type="project" value="UniProtKB"/>
</dbReference>
<dbReference type="GO" id="GO:0005764">
    <property type="term" value="C:lysosome"/>
    <property type="evidence" value="ECO:0000318"/>
    <property type="project" value="GO_Central"/>
</dbReference>
<dbReference type="GO" id="GO:0016020">
    <property type="term" value="C:membrane"/>
    <property type="evidence" value="ECO:0007669"/>
    <property type="project" value="UniProtKB-SubCell"/>
</dbReference>
<dbReference type="GO" id="GO:0005775">
    <property type="term" value="C:vacuolar lumen"/>
    <property type="evidence" value="ECO:0007669"/>
    <property type="project" value="UniProtKB-SubCell"/>
</dbReference>
<dbReference type="GO" id="GO:0004190">
    <property type="term" value="F:aspartic-type endopeptidase activity"/>
    <property type="evidence" value="ECO:0000314"/>
    <property type="project" value="UniProtKB"/>
</dbReference>
<dbReference type="GO" id="GO:0044002">
    <property type="term" value="P:acquisition of nutrients from host"/>
    <property type="evidence" value="ECO:0000314"/>
    <property type="project" value="UniProtKB"/>
</dbReference>
<dbReference type="GO" id="GO:0042540">
    <property type="term" value="P:hemoglobin catabolic process"/>
    <property type="evidence" value="ECO:0000250"/>
    <property type="project" value="GeneDB"/>
</dbReference>
<dbReference type="GO" id="GO:0006508">
    <property type="term" value="P:proteolysis"/>
    <property type="evidence" value="ECO:0000318"/>
    <property type="project" value="GO_Central"/>
</dbReference>
<dbReference type="CDD" id="cd05471">
    <property type="entry name" value="pepsin_like"/>
    <property type="match status" value="1"/>
</dbReference>
<dbReference type="FunFam" id="2.40.70.10:FF:000035">
    <property type="entry name" value="Plasmepsin-2"/>
    <property type="match status" value="1"/>
</dbReference>
<dbReference type="FunFam" id="2.40.70.10:FF:000038">
    <property type="entry name" value="Plasmepsin-2"/>
    <property type="match status" value="1"/>
</dbReference>
<dbReference type="Gene3D" id="2.40.70.10">
    <property type="entry name" value="Acid Proteases"/>
    <property type="match status" value="2"/>
</dbReference>
<dbReference type="InterPro" id="IPR001461">
    <property type="entry name" value="Aspartic_peptidase_A1"/>
</dbReference>
<dbReference type="InterPro" id="IPR001969">
    <property type="entry name" value="Aspartic_peptidase_AS"/>
</dbReference>
<dbReference type="InterPro" id="IPR034164">
    <property type="entry name" value="Pepsin-like_dom"/>
</dbReference>
<dbReference type="InterPro" id="IPR033121">
    <property type="entry name" value="PEPTIDASE_A1"/>
</dbReference>
<dbReference type="InterPro" id="IPR021109">
    <property type="entry name" value="Peptidase_aspartic_dom_sf"/>
</dbReference>
<dbReference type="PANTHER" id="PTHR47966">
    <property type="entry name" value="BETA-SITE APP-CLEAVING ENZYME, ISOFORM A-RELATED"/>
    <property type="match status" value="1"/>
</dbReference>
<dbReference type="PANTHER" id="PTHR47966:SF51">
    <property type="entry name" value="BETA-SITE APP-CLEAVING ENZYME, ISOFORM A-RELATED"/>
    <property type="match status" value="1"/>
</dbReference>
<dbReference type="Pfam" id="PF00026">
    <property type="entry name" value="Asp"/>
    <property type="match status" value="1"/>
</dbReference>
<dbReference type="PRINTS" id="PR00792">
    <property type="entry name" value="PEPSIN"/>
</dbReference>
<dbReference type="SUPFAM" id="SSF50630">
    <property type="entry name" value="Acid proteases"/>
    <property type="match status" value="1"/>
</dbReference>
<dbReference type="PROSITE" id="PS00141">
    <property type="entry name" value="ASP_PROTEASE"/>
    <property type="match status" value="2"/>
</dbReference>
<dbReference type="PROSITE" id="PS51767">
    <property type="entry name" value="PEPTIDASE_A1"/>
    <property type="match status" value="1"/>
</dbReference>
<reference evidence="12" key="1">
    <citation type="journal article" date="2002" name="Nature">
        <title>Genome sequence of the human malaria parasite Plasmodium falciparum.</title>
        <authorList>
            <person name="Gardner M.J."/>
            <person name="Hall N."/>
            <person name="Fung E."/>
            <person name="White O."/>
            <person name="Berriman M."/>
            <person name="Hyman R.W."/>
            <person name="Carlton J.M."/>
            <person name="Pain A."/>
            <person name="Nelson K.E."/>
            <person name="Bowman S."/>
            <person name="Paulsen I.T."/>
            <person name="James K.D."/>
            <person name="Eisen J.A."/>
            <person name="Rutherford K.M."/>
            <person name="Salzberg S.L."/>
            <person name="Craig A."/>
            <person name="Kyes S."/>
            <person name="Chan M.-S."/>
            <person name="Nene V."/>
            <person name="Shallom S.J."/>
            <person name="Suh B."/>
            <person name="Peterson J."/>
            <person name="Angiuoli S."/>
            <person name="Pertea M."/>
            <person name="Allen J."/>
            <person name="Selengut J."/>
            <person name="Haft D."/>
            <person name="Mather M.W."/>
            <person name="Vaidya A.B."/>
            <person name="Martin D.M.A."/>
            <person name="Fairlamb A.H."/>
            <person name="Fraunholz M.J."/>
            <person name="Roos D.S."/>
            <person name="Ralph S.A."/>
            <person name="McFadden G.I."/>
            <person name="Cummings L.M."/>
            <person name="Subramanian G.M."/>
            <person name="Mungall C."/>
            <person name="Venter J.C."/>
            <person name="Carucci D.J."/>
            <person name="Hoffman S.L."/>
            <person name="Newbold C."/>
            <person name="Davis R.W."/>
            <person name="Fraser C.M."/>
            <person name="Barrell B.G."/>
        </authorList>
    </citation>
    <scope>NUCLEOTIDE SEQUENCE [LARGE SCALE GENOMIC DNA]</scope>
    <source>
        <strain evidence="12">3D7</strain>
    </source>
</reference>
<reference evidence="10" key="2">
    <citation type="journal article" date="2007" name="Mol. Microbiol.">
        <title>Critical roles for the digestive vacuole plasmepsins of Plasmodium falciparum in vacuolar function.</title>
        <authorList>
            <person name="Bonilla J.A."/>
            <person name="Bonilla T.D."/>
            <person name="Yowell C.A."/>
            <person name="Fujioka H."/>
            <person name="Dame J.B."/>
        </authorList>
    </citation>
    <scope>DISRUPTION PHENOTYPE</scope>
</reference>
<reference evidence="10" key="3">
    <citation type="journal article" date="2013" name="Proc. Natl. Acad. Sci. U.S.A.">
        <title>Protein complex directs hemoglobin-to-hemozoin formation in Plasmodium falciparum.</title>
        <authorList>
            <person name="Chugh M."/>
            <person name="Sundararaman V."/>
            <person name="Kumar S."/>
            <person name="Reddy V.S."/>
            <person name="Siddiqui W.A."/>
            <person name="Stuart K.D."/>
            <person name="Malhotra P."/>
        </authorList>
    </citation>
    <scope>IDENTIFICATION IN THE HEMOZOIN FORMATION COMPLEX</scope>
    <scope>SUBCELLULAR LOCATION</scope>
    <scope>DEVELOPMENTAL STAGE</scope>
    <scope>IDENTIFICATION BY MASS SPECTROMETRY</scope>
</reference>
<reference evidence="10" key="4">
    <citation type="journal article" date="2018" name="FEBS J.">
        <title>Deciphering the mechanism of potent peptidomimetic inhibitors targeting plasmepsins - biochemical and structural insights.</title>
        <authorList>
            <person name="Mishra V."/>
            <person name="Rathore I."/>
            <person name="Arekar A."/>
            <person name="Sthanam L.K."/>
            <person name="Xiao H."/>
            <person name="Kiso Y."/>
            <person name="Sen S."/>
            <person name="Patankar S."/>
            <person name="Gustchina A."/>
            <person name="Hidaka K."/>
            <person name="Wlodawer A."/>
            <person name="Yada R.Y."/>
            <person name="Bhaumik P."/>
        </authorList>
    </citation>
    <scope>CATALYTIC ACTIVITY</scope>
    <scope>ACTIVITY REGULATION</scope>
</reference>
<reference evidence="13" key="5">
    <citation type="journal article" date="2003" name="J. Mol. Biol.">
        <title>Novel uncomplexed and complexed structures of plasmepsin II, an aspartic protease from Plasmodium falciparum.</title>
        <authorList>
            <person name="Asojo O.A."/>
            <person name="Gulnik S.V."/>
            <person name="Afonina E."/>
            <person name="Yu B."/>
            <person name="Ellman J.A."/>
            <person name="Haque T.S."/>
            <person name="Silva A.M."/>
        </authorList>
    </citation>
    <scope>X-RAY CRYSTALLOGRAPHY (2.80 ANGSTROMS) OF 122-449 WITH INHIBITOR</scope>
    <scope>DISULFIDE BONDS</scope>
</reference>
<proteinExistence type="evidence at protein level"/>
<comment type="function">
    <text evidence="1 10">During the asexual blood stage, catalyzes the cleavage of denatured host hemoglobin (Hb) (By similarity). Digestion of host Hb is an essential step which provides the parasite with amino acids for protein synthesis, and regulates osmolarity (Probable).</text>
</comment>
<comment type="catalytic activity">
    <reaction evidence="8">
        <text>Hydrolysis of the bonds linking certain hydrophobic residues in hemoglobin or globin. Also cleaves small molecules substrates such as Ala-Leu-Glu-Arg-Thr-Phe-|-Phe(NO2)-Ser-Phe-Pro-Thr.</text>
        <dbReference type="EC" id="3.4.23.39"/>
    </reaction>
</comment>
<comment type="activity regulation">
    <text evidence="8">Inhibited by KNI derived compounds KNI-10333 and to a lesser extent KNI-10743.</text>
</comment>
<comment type="subunit">
    <text evidence="7">Component of the hemozoin formation complex (HFC) composed of falcipains FP2A and/or FP2B, plasmepsins PMII, PMIII/HAP and PMIV, heme detoxifying protein HDP and falcilysin FLN (PubMed:23471987). The HFC complex is involved in hemoglobin degradation and detoxification of heme in the food vacuole during the asexual blood stage (PubMed:23471987).</text>
</comment>
<comment type="subcellular location">
    <subcellularLocation>
        <location evidence="2">Membrane</location>
        <topology evidence="2">Single-pass type II membrane protein</topology>
    </subcellularLocation>
    <subcellularLocation>
        <location evidence="7">Vacuole lumen</location>
    </subcellularLocation>
    <text evidence="7">In trophozoites, localizes to the digestive (or food) vacuole, an acidic vacuole where host hemoglobin is digested.</text>
</comment>
<comment type="developmental stage">
    <text evidence="7">Expressed during the asexual blood stage; expression begins in trophozoites and continues in schizonts (at protein level).</text>
</comment>
<comment type="PTM">
    <text evidence="1">Proteolytically cleaved into the soluble active mature form by cysteine proteases in the digestive vacuole of trophozoites. Proteolysis requires an acidic environment. Autoprocessing or transprocessing by other plasmepsins such as PMII may serve as an alternate activation system.</text>
</comment>
<comment type="disruption phenotype">
    <text evidence="6">Quadruple knockout of PMI, PMII, PMIII and PMIV causes a decrease in proliferation, an impaired proliferation in an amino acid-limited medium, a reduced formation of haemozoin and an abnormal accumulation of endosomal vesicles inside the digestive vacuole.</text>
</comment>
<comment type="similarity">
    <text evidence="4">Belongs to the peptidase A1 family.</text>
</comment>
<comment type="caution">
    <text evidence="10">It is unclear if PMIV is glycosylated as other members of the same enzyme family, ie. PMI and PMII, are not.</text>
</comment>
<gene>
    <name evidence="9" type="primary">PMIV</name>
    <name evidence="11" type="ORF">PF3D7_1407800</name>
</gene>
<keyword id="KW-0002">3D-structure</keyword>
<keyword id="KW-0064">Aspartyl protease</keyword>
<keyword id="KW-1015">Disulfide bond</keyword>
<keyword id="KW-0378">Hydrolase</keyword>
<keyword id="KW-0472">Membrane</keyword>
<keyword id="KW-0645">Protease</keyword>
<keyword id="KW-1185">Reference proteome</keyword>
<keyword id="KW-0735">Signal-anchor</keyword>
<keyword id="KW-0812">Transmembrane</keyword>
<keyword id="KW-1133">Transmembrane helix</keyword>
<keyword id="KW-0926">Vacuole</keyword>
<keyword id="KW-0865">Zymogen</keyword>
<name>PLM4_PLAF7</name>